<keyword id="KW-1185">Reference proteome</keyword>
<name>ACDE_METKA</name>
<comment type="function">
    <text evidence="1">Part of a complex that catalyzes the reversible cleavage of acetyl-CoA, allowing autotrophic growth from CO(2). The alpha-epsilon subcomponent functions as a carbon monoxide dehydrogenase. The precise role of the epsilon subunit is unclear; it may have a stabilizing role within the alpha(2)epsilon(2) component and/or be involved in electron transfer to FAD during a potential FAD-mediated CO oxidation.</text>
</comment>
<comment type="subunit">
    <text evidence="1">Heterotetramer of two alpha and two epsilon subunits. The ACDS complex is made up of alpha, epsilon, beta, gamma and delta subunits with a probable stoichiometry of (alpha(2)epsilon(2))(4)-beta(8)-(gamma(1)delta(1))(8).</text>
</comment>
<comment type="similarity">
    <text evidence="2">Belongs to the CdhB family.</text>
</comment>
<gene>
    <name type="primary">cdhB</name>
    <name type="ordered locus">MK0718</name>
</gene>
<reference key="1">
    <citation type="journal article" date="2002" name="Proc. Natl. Acad. Sci. U.S.A.">
        <title>The complete genome of hyperthermophile Methanopyrus kandleri AV19 and monophyly of archaeal methanogens.</title>
        <authorList>
            <person name="Slesarev A.I."/>
            <person name="Mezhevaya K.V."/>
            <person name="Makarova K.S."/>
            <person name="Polushin N.N."/>
            <person name="Shcherbinina O.V."/>
            <person name="Shakhova V.V."/>
            <person name="Belova G.I."/>
            <person name="Aravind L."/>
            <person name="Natale D.A."/>
            <person name="Rogozin I.B."/>
            <person name="Tatusov R.L."/>
            <person name="Wolf Y.I."/>
            <person name="Stetter K.O."/>
            <person name="Malykh A.G."/>
            <person name="Koonin E.V."/>
            <person name="Kozyavkin S.A."/>
        </authorList>
    </citation>
    <scope>NUCLEOTIDE SEQUENCE [LARGE SCALE GENOMIC DNA]</scope>
    <source>
        <strain>AV19 / DSM 6324 / JCM 9639 / NBRC 100938</strain>
    </source>
</reference>
<organism>
    <name type="scientific">Methanopyrus kandleri (strain AV19 / DSM 6324 / JCM 9639 / NBRC 100938)</name>
    <dbReference type="NCBI Taxonomy" id="190192"/>
    <lineage>
        <taxon>Archaea</taxon>
        <taxon>Methanobacteriati</taxon>
        <taxon>Methanobacteriota</taxon>
        <taxon>Methanomada group</taxon>
        <taxon>Methanopyri</taxon>
        <taxon>Methanopyrales</taxon>
        <taxon>Methanopyraceae</taxon>
        <taxon>Methanopyrus</taxon>
    </lineage>
</organism>
<evidence type="ECO:0000250" key="1">
    <source>
        <dbReference type="UniProtKB" id="Q46G05"/>
    </source>
</evidence>
<evidence type="ECO:0000305" key="2"/>
<dbReference type="EMBL" id="AE009439">
    <property type="protein sequence ID" value="AAM01932.1"/>
    <property type="molecule type" value="Genomic_DNA"/>
</dbReference>
<dbReference type="RefSeq" id="WP_011019087.1">
    <property type="nucleotide sequence ID" value="NC_003551.1"/>
</dbReference>
<dbReference type="SMR" id="Q8TXF6"/>
<dbReference type="FunCoup" id="Q8TXF6">
    <property type="interactions" value="63"/>
</dbReference>
<dbReference type="STRING" id="190192.MK0718"/>
<dbReference type="PaxDb" id="190192-MK0718"/>
<dbReference type="EnsemblBacteria" id="AAM01932">
    <property type="protein sequence ID" value="AAM01932"/>
    <property type="gene ID" value="MK0718"/>
</dbReference>
<dbReference type="GeneID" id="1476819"/>
<dbReference type="KEGG" id="mka:MK0718"/>
<dbReference type="HOGENOM" id="CLU_1656877_0_0_2"/>
<dbReference type="InParanoid" id="Q8TXF6"/>
<dbReference type="OrthoDB" id="373211at2157"/>
<dbReference type="Proteomes" id="UP000001826">
    <property type="component" value="Chromosome"/>
</dbReference>
<dbReference type="GO" id="GO:0019385">
    <property type="term" value="P:methanogenesis, from acetate"/>
    <property type="evidence" value="ECO:0007669"/>
    <property type="project" value="InterPro"/>
</dbReference>
<dbReference type="Gene3D" id="3.40.50.1220">
    <property type="entry name" value="TPP-binding domain"/>
    <property type="match status" value="1"/>
</dbReference>
<dbReference type="InterPro" id="IPR003704">
    <property type="entry name" value="CdhB"/>
</dbReference>
<dbReference type="InterPro" id="IPR029035">
    <property type="entry name" value="DHS-like_NAD/FAD-binding_dom"/>
</dbReference>
<dbReference type="Pfam" id="PF02552">
    <property type="entry name" value="CO_dh"/>
    <property type="match status" value="1"/>
</dbReference>
<dbReference type="SUPFAM" id="SSF52467">
    <property type="entry name" value="DHS-like NAD/FAD-binding domain"/>
    <property type="match status" value="1"/>
</dbReference>
<proteinExistence type="inferred from homology"/>
<feature type="chain" id="PRO_0000155091" description="Acetyl-CoA decarbonylase/synthase complex subunit epsilon">
    <location>
        <begin position="1"/>
        <end position="159"/>
    </location>
</feature>
<accession>Q8TXF6</accession>
<sequence>MPLPRDPTLIYTDKAEVARAPVLKMVFRRANDSLMIVGPRAVEDEEWRELLMKLREEFRMSAVCTAPYKGNDLGRKMGIVEAATLLQRDAPVLGVHPDLVVFTGSRTDVTDRVLQGLRHARPDLVKVSLNPEYCPSADYSLPTVKRDQFLQELKALVGI</sequence>
<protein>
    <recommendedName>
        <fullName evidence="1">Acetyl-CoA decarbonylase/synthase complex subunit epsilon</fullName>
        <shortName evidence="1">ACDS complex subunit epsilon</shortName>
    </recommendedName>
    <alternativeName>
        <fullName evidence="1">ACDS complex carbon monoxide dehydrogenase subunit epsilon</fullName>
        <shortName evidence="1">ACDS CODH subunit epsilon</shortName>
    </alternativeName>
</protein>